<organism>
    <name type="scientific">Escherichia coli O6:H1 (strain CFT073 / ATCC 700928 / UPEC)</name>
    <dbReference type="NCBI Taxonomy" id="199310"/>
    <lineage>
        <taxon>Bacteria</taxon>
        <taxon>Pseudomonadati</taxon>
        <taxon>Pseudomonadota</taxon>
        <taxon>Gammaproteobacteria</taxon>
        <taxon>Enterobacterales</taxon>
        <taxon>Enterobacteriaceae</taxon>
        <taxon>Escherichia</taxon>
    </lineage>
</organism>
<evidence type="ECO:0000255" key="1">
    <source>
        <dbReference type="HAMAP-Rule" id="MF_01632"/>
    </source>
</evidence>
<reference key="1">
    <citation type="journal article" date="2002" name="Proc. Natl. Acad. Sci. U.S.A.">
        <title>Extensive mosaic structure revealed by the complete genome sequence of uropathogenic Escherichia coli.</title>
        <authorList>
            <person name="Welch R.A."/>
            <person name="Burland V."/>
            <person name="Plunkett G. III"/>
            <person name="Redford P."/>
            <person name="Roesch P."/>
            <person name="Rasko D."/>
            <person name="Buckles E.L."/>
            <person name="Liou S.-R."/>
            <person name="Boutin A."/>
            <person name="Hackett J."/>
            <person name="Stroud D."/>
            <person name="Mayhew G.F."/>
            <person name="Rose D.J."/>
            <person name="Zhou S."/>
            <person name="Schwartz D.C."/>
            <person name="Perna N.T."/>
            <person name="Mobley H.L.T."/>
            <person name="Donnenberg M.S."/>
            <person name="Blattner F.R."/>
        </authorList>
    </citation>
    <scope>NUCLEOTIDE SEQUENCE [LARGE SCALE GENOMIC DNA]</scope>
    <source>
        <strain>CFT073 / ATCC 700928 / UPEC</strain>
    </source>
</reference>
<keyword id="KW-0963">Cytoplasm</keyword>
<keyword id="KW-0456">Lyase</keyword>
<keyword id="KW-0670">Pyruvate</keyword>
<keyword id="KW-1185">Reference proteome</keyword>
<keyword id="KW-0831">Ubiquinone biosynthesis</keyword>
<protein>
    <recommendedName>
        <fullName evidence="1">Chorismate pyruvate-lyase</fullName>
        <shortName evidence="1">CL</shortName>
        <shortName evidence="1">CPL</shortName>
        <ecNumber evidence="1">4.1.3.40</ecNumber>
    </recommendedName>
</protein>
<feature type="chain" id="PRO_0000240547" description="Chorismate pyruvate-lyase">
    <location>
        <begin position="1"/>
        <end position="165"/>
    </location>
</feature>
<feature type="binding site" evidence="1">
    <location>
        <position position="35"/>
    </location>
    <ligand>
        <name>substrate</name>
    </ligand>
</feature>
<feature type="binding site" evidence="1">
    <location>
        <position position="77"/>
    </location>
    <ligand>
        <name>substrate</name>
    </ligand>
</feature>
<feature type="binding site" evidence="1">
    <location>
        <position position="115"/>
    </location>
    <ligand>
        <name>substrate</name>
    </ligand>
</feature>
<feature type="binding site" evidence="1">
    <location>
        <position position="156"/>
    </location>
    <ligand>
        <name>substrate</name>
    </ligand>
</feature>
<accession>Q8FB35</accession>
<proteinExistence type="inferred from homology"/>
<gene>
    <name evidence="1" type="primary">ubiC</name>
    <name type="ordered locus">c5009</name>
</gene>
<sequence>MSHPALTQLRALRYFTEIPALEPQLLDWLLLEDSMTKRFEQQGKTVSVTMIREGFVEQNEIPEELPLLPKESRYWLREILLCADGEPWLAGRTVVPVSTLSGPELALQKLGKTPLGRYLFTSSTLTRDFIEIGRDAGLWGRRSRLRLSGKPLLLTELFLPASPLY</sequence>
<name>UBIC_ECOL6</name>
<comment type="function">
    <text evidence="1">Removes the pyruvyl group from chorismate, with concomitant aromatization of the ring, to provide 4-hydroxybenzoate (4HB) for the ubiquinone pathway.</text>
</comment>
<comment type="catalytic activity">
    <reaction evidence="1">
        <text>chorismate = 4-hydroxybenzoate + pyruvate</text>
        <dbReference type="Rhea" id="RHEA:16505"/>
        <dbReference type="ChEBI" id="CHEBI:15361"/>
        <dbReference type="ChEBI" id="CHEBI:17879"/>
        <dbReference type="ChEBI" id="CHEBI:29748"/>
        <dbReference type="EC" id="4.1.3.40"/>
    </reaction>
</comment>
<comment type="pathway">
    <text evidence="1">Cofactor biosynthesis; ubiquinone biosynthesis.</text>
</comment>
<comment type="subunit">
    <text evidence="1">Monomer.</text>
</comment>
<comment type="subcellular location">
    <subcellularLocation>
        <location evidence="1">Cytoplasm</location>
    </subcellularLocation>
</comment>
<comment type="similarity">
    <text evidence="1">Belongs to the UbiC family.</text>
</comment>
<dbReference type="EC" id="4.1.3.40" evidence="1"/>
<dbReference type="EMBL" id="AE014075">
    <property type="protein sequence ID" value="AAN83435.1"/>
    <property type="molecule type" value="Genomic_DNA"/>
</dbReference>
<dbReference type="RefSeq" id="WP_000019227.1">
    <property type="nucleotide sequence ID" value="NZ_CP051263.1"/>
</dbReference>
<dbReference type="SMR" id="Q8FB35"/>
<dbReference type="STRING" id="199310.c5009"/>
<dbReference type="KEGG" id="ecc:c5009"/>
<dbReference type="eggNOG" id="COG3161">
    <property type="taxonomic scope" value="Bacteria"/>
</dbReference>
<dbReference type="HOGENOM" id="CLU_096824_1_0_6"/>
<dbReference type="BioCyc" id="ECOL199310:C5009-MONOMER"/>
<dbReference type="UniPathway" id="UPA00232"/>
<dbReference type="Proteomes" id="UP000001410">
    <property type="component" value="Chromosome"/>
</dbReference>
<dbReference type="GO" id="GO:0005829">
    <property type="term" value="C:cytosol"/>
    <property type="evidence" value="ECO:0007669"/>
    <property type="project" value="TreeGrafter"/>
</dbReference>
<dbReference type="GO" id="GO:0008813">
    <property type="term" value="F:chorismate lyase activity"/>
    <property type="evidence" value="ECO:0007669"/>
    <property type="project" value="UniProtKB-UniRule"/>
</dbReference>
<dbReference type="GO" id="GO:0042866">
    <property type="term" value="P:pyruvate biosynthetic process"/>
    <property type="evidence" value="ECO:0007669"/>
    <property type="project" value="UniProtKB-UniRule"/>
</dbReference>
<dbReference type="GO" id="GO:0006744">
    <property type="term" value="P:ubiquinone biosynthetic process"/>
    <property type="evidence" value="ECO:0007669"/>
    <property type="project" value="UniProtKB-UniRule"/>
</dbReference>
<dbReference type="FunFam" id="3.40.1410.10:FF:000002">
    <property type="entry name" value="Chorismate pyruvate-lyase"/>
    <property type="match status" value="1"/>
</dbReference>
<dbReference type="Gene3D" id="3.40.1410.10">
    <property type="entry name" value="Chorismate lyase-like"/>
    <property type="match status" value="1"/>
</dbReference>
<dbReference type="HAMAP" id="MF_01632">
    <property type="entry name" value="UbiC"/>
    <property type="match status" value="1"/>
</dbReference>
<dbReference type="InterPro" id="IPR007440">
    <property type="entry name" value="Chorismate--pyruvate_lyase"/>
</dbReference>
<dbReference type="InterPro" id="IPR028978">
    <property type="entry name" value="Chorismate_lyase_/UTRA_dom_sf"/>
</dbReference>
<dbReference type="NCBIfam" id="NF008656">
    <property type="entry name" value="PRK11655.1"/>
    <property type="match status" value="1"/>
</dbReference>
<dbReference type="PANTHER" id="PTHR38683">
    <property type="entry name" value="CHORISMATE PYRUVATE-LYASE"/>
    <property type="match status" value="1"/>
</dbReference>
<dbReference type="PANTHER" id="PTHR38683:SF1">
    <property type="entry name" value="CHORISMATE PYRUVATE-LYASE"/>
    <property type="match status" value="1"/>
</dbReference>
<dbReference type="Pfam" id="PF04345">
    <property type="entry name" value="Chor_lyase"/>
    <property type="match status" value="1"/>
</dbReference>
<dbReference type="SUPFAM" id="SSF64288">
    <property type="entry name" value="Chorismate lyase-like"/>
    <property type="match status" value="1"/>
</dbReference>